<reference key="1">
    <citation type="journal article" date="1994" name="J. Bacteriol.">
        <title>The vfr gene product, required for Pseudomonas aeruginosa exotoxin A and protease production, belongs to the cyclic AMP receptor protein family.</title>
        <authorList>
            <person name="West S.E.H."/>
            <person name="Sample A.K."/>
            <person name="Runyen-Janecky L.J."/>
        </authorList>
    </citation>
    <scope>NUCLEOTIDE SEQUENCE [GENOMIC DNA]</scope>
    <source>
        <strain>ATCC 15692 / DSM 22644 / CIP 104116 / JCM 14847 / LMG 12228 / 1C / PRS 101 / PAO1</strain>
    </source>
</reference>
<reference key="2">
    <citation type="journal article" date="2000" name="Nature">
        <title>Complete genome sequence of Pseudomonas aeruginosa PAO1, an opportunistic pathogen.</title>
        <authorList>
            <person name="Stover C.K."/>
            <person name="Pham X.-Q.T."/>
            <person name="Erwin A.L."/>
            <person name="Mizoguchi S.D."/>
            <person name="Warrener P."/>
            <person name="Hickey M.J."/>
            <person name="Brinkman F.S.L."/>
            <person name="Hufnagle W.O."/>
            <person name="Kowalik D.J."/>
            <person name="Lagrou M."/>
            <person name="Garber R.L."/>
            <person name="Goltry L."/>
            <person name="Tolentino E."/>
            <person name="Westbrock-Wadman S."/>
            <person name="Yuan Y."/>
            <person name="Brody L.L."/>
            <person name="Coulter S.N."/>
            <person name="Folger K.R."/>
            <person name="Kas A."/>
            <person name="Larbig K."/>
            <person name="Lim R.M."/>
            <person name="Smith K.A."/>
            <person name="Spencer D.H."/>
            <person name="Wong G.K.-S."/>
            <person name="Wu Z."/>
            <person name="Paulsen I.T."/>
            <person name="Reizer J."/>
            <person name="Saier M.H. Jr."/>
            <person name="Hancock R.E.W."/>
            <person name="Lory S."/>
            <person name="Olson M.V."/>
        </authorList>
    </citation>
    <scope>NUCLEOTIDE SEQUENCE [LARGE SCALE GENOMIC DNA]</scope>
    <source>
        <strain>ATCC 15692 / DSM 22644 / CIP 104116 / JCM 14847 / LMG 12228 / 1C / PRS 101 / PAO1</strain>
    </source>
</reference>
<reference key="3">
    <citation type="journal article" date="1997" name="J. Bacteriol.">
        <title>Vfr controls quorum sensing in Pseudomonas aeruginosa.</title>
        <authorList>
            <person name="Albus A.M."/>
            <person name="Pesci E.C."/>
            <person name="Runyen-Janecky L.J."/>
            <person name="West S.E."/>
            <person name="Iglewski B.H."/>
        </authorList>
    </citation>
    <scope>FUNCTION</scope>
    <scope>DNA-BINDING</scope>
    <source>
        <strain>ATCC 15692 / DSM 22644 / CIP 104116 / JCM 14847 / LMG 12228 / 1C / PRS 101 / PAO1</strain>
    </source>
</reference>
<reference key="4">
    <citation type="journal article" date="2002" name="J. Bacteriol.">
        <title>Differential regulation of twitching motility and elastase production by Vfr in Pseudomonas aeruginosa.</title>
        <authorList>
            <person name="Beatson S.A."/>
            <person name="Whitchurch C.B."/>
            <person name="Sargent J.L."/>
            <person name="Levesque R.C."/>
            <person name="Mattick J.S."/>
        </authorList>
    </citation>
    <scope>FUNCTION</scope>
    <scope>DISRUPTION PHENOTYPE</scope>
    <scope>ACTIVITY REGULATION</scope>
    <source>
        <strain>PAK</strain>
    </source>
</reference>
<reference key="5">
    <citation type="journal article" date="2006" name="Microbiology">
        <title>Characterization of DNA-binding specificity and analysis of binding sites of the Pseudomonas aeruginosa global regulator, Vfr, a homologue of the Escherichia coli cAMP receptor protein.</title>
        <authorList>
            <person name="Kanack K.J."/>
            <person name="Runyen-Janecky L.J."/>
            <person name="Ferrell E.P."/>
            <person name="Suh S.J."/>
            <person name="West S.E.H."/>
        </authorList>
    </citation>
    <scope>FUNCTION</scope>
    <scope>DNA-BINDING</scope>
</reference>
<reference key="6">
    <citation type="journal article" date="2009" name="Microbiology">
        <title>Role of Vfr in regulating exotoxin A production by Pseudomonas aeruginosa.</title>
        <authorList>
            <person name="Davinic M."/>
            <person name="Carty N.L."/>
            <person name="Colmer-Hamood J.A."/>
            <person name="San Francisco M."/>
            <person name="Hamood A.N."/>
        </authorList>
    </citation>
    <scope>FUNCTION</scope>
</reference>
<reference key="7">
    <citation type="journal article" date="2010" name="J. Bacteriol.">
        <title>The Pseudomonas aeruginosa Vfr regulator controls global virulence factor expression through cyclic AMP-dependent and -independent mechanisms.</title>
        <authorList>
            <person name="Fuchs E.L."/>
            <person name="Brutinel E.D."/>
            <person name="Jones A.K."/>
            <person name="Fulcher N.B."/>
            <person name="Urbanowski M.L."/>
            <person name="Yahr T.L."/>
            <person name="Wolfgang M.C."/>
        </authorList>
    </citation>
    <scope>FUNCTION</scope>
    <scope>ACTIVITY REGULATION</scope>
</reference>
<reference key="8">
    <citation type="journal article" date="2015" name="J. Bacteriol.">
        <title>The Cyclic AMP-Vfr Signaling Pathway in Pseudomonas aeruginosa Is Inhibited by Cyclic Di-GMP.</title>
        <authorList>
            <person name="Almblad H."/>
            <person name="Harrison J.J."/>
            <person name="Rybtke M."/>
            <person name="Groizeleau J."/>
            <person name="Givskov M."/>
            <person name="Parsek M.R."/>
            <person name="Tolker-Nielsen T."/>
        </authorList>
    </citation>
    <scope>FUNCTION</scope>
    <scope>ACTIVITY REGULATION</scope>
</reference>
<reference key="9">
    <citation type="journal article" date="2016" name="J. Bacteriol.">
        <title>Vfr Directly Activates exsA Transcription To Regulate Expression of the Pseudomonas aeruginosa Type III Secretion System.</title>
        <authorList>
            <person name="Marsden A.E."/>
            <person name="Intile P.J."/>
            <person name="Schulmeyer K.H."/>
            <person name="Simmons-Patterson E.R."/>
            <person name="Urbanowski M.L."/>
            <person name="Wolfgang M.C."/>
            <person name="Yahr T.L."/>
        </authorList>
    </citation>
    <scope>FUNCTION</scope>
    <scope>DISRUPTION PHENOTYPE</scope>
</reference>
<reference key="10">
    <citation type="journal article" date="2019" name="Front. Microbiol.">
        <title>NrtR Regulates the Type III Secretion System Through cAMP/Vfr Pathway in Pseudomonas aeruginosa.</title>
        <authorList>
            <person name="Jin Y."/>
            <person name="Zhang M."/>
            <person name="Zhu F."/>
            <person name="Peng Q."/>
            <person name="Weng Y."/>
            <person name="Zhao Q."/>
            <person name="Liu C."/>
            <person name="Bai F."/>
            <person name="Cheng Z."/>
            <person name="Jin S."/>
            <person name="Wu W."/>
        </authorList>
    </citation>
    <scope>FUNCTION</scope>
    <source>
        <strain>PAK</strain>
    </source>
</reference>
<reference evidence="11" key="11">
    <citation type="journal article" date="2011" name="J. Bacteriol.">
        <title>Crystal structure of the Pseudomonas aeruginosa virulence factor regulator.</title>
        <authorList>
            <person name="Cordes T.J."/>
            <person name="Worzalla G.A."/>
            <person name="Ginster A.M."/>
            <person name="Forest K.T."/>
        </authorList>
    </citation>
    <scope>X-RAY CRYSTALLOGRAPHY (2.80 ANGSTROMS) OF 9-214 IN COMPLEX WITH CAMP</scope>
    <scope>SUBUNIT</scope>
    <scope>DNA-BINDING</scope>
</reference>
<comment type="function">
    <text evidence="2 3 4 5 8 9 10">Global cAMP-dependent transcriptional regulator that controls virulence gene expression by distinct cAMP-dependent and -independent mechanisms, which allow to fine tune its virulence program in response to specific host cues or environments (PubMed:20494996). Controls the expression of many regulatory targets including type II, type III and type IV secretion systems, flagellar-mediated motility, and quorum sensing systems (PubMed:12057955, PubMed:26929300, PubMed:30761117, PubMed:9190808). Transcriptional control is exerted by binding to a well-characterized consensus site (5'-ANWWTGNGAWNYAGWTCACAT) within target promoters (PubMed:17159200, PubMed:20494996, PubMed:26929300). Directly binds to the toxA upstream region to regulate exotoxin A production, to the lasR gene promoter to activate the las quorum-sensing system or to the exsA promoter to regulate type III secretion system (PubMed:12057955, PubMed:19389782, PubMed:9190808). Autoregulates as well its own expression (PubMed:20494996).</text>
</comment>
<comment type="subunit">
    <text evidence="6">Homodimer.</text>
</comment>
<comment type="induction">
    <text evidence="2 5 7">Regulated by both cAMP and cGMP to allow differential regulation of different regulons (PubMed:12057955). Cyclic AMP is required for Vfr binding to vfr, regA, ptxR, and cpdA promoter DNA (PubMed:20494996, PubMed:25897033). Cyclic GMP instead inhibits the formation of Vfr-DNA complexes (PubMed:20494996, PubMed:25897033).</text>
</comment>
<comment type="disruption phenotype">
    <text evidence="2 8">Mutants show loss of twitching motility and are defective in type IV pilus assembly (PubMed:12057955). Expression of ExsA is also strongly affected in the mutant (PubMed:26929300).</text>
</comment>
<keyword id="KW-0002">3D-structure</keyword>
<keyword id="KW-0114">cAMP</keyword>
<keyword id="KW-0116">cAMP-binding</keyword>
<keyword id="KW-0238">DNA-binding</keyword>
<keyword id="KW-0547">Nucleotide-binding</keyword>
<keyword id="KW-1185">Reference proteome</keyword>
<keyword id="KW-0804">Transcription</keyword>
<keyword id="KW-0805">Transcription regulation</keyword>
<keyword id="KW-0843">Virulence</keyword>
<evidence type="ECO:0000255" key="1">
    <source>
        <dbReference type="PROSITE-ProRule" id="PRU00387"/>
    </source>
</evidence>
<evidence type="ECO:0000269" key="2">
    <source>
    </source>
</evidence>
<evidence type="ECO:0000269" key="3">
    <source>
    </source>
</evidence>
<evidence type="ECO:0000269" key="4">
    <source>
    </source>
</evidence>
<evidence type="ECO:0000269" key="5">
    <source>
    </source>
</evidence>
<evidence type="ECO:0000269" key="6">
    <source>
    </source>
</evidence>
<evidence type="ECO:0000269" key="7">
    <source>
    </source>
</evidence>
<evidence type="ECO:0000269" key="8">
    <source>
    </source>
</evidence>
<evidence type="ECO:0000269" key="9">
    <source>
    </source>
</evidence>
<evidence type="ECO:0000269" key="10">
    <source>
    </source>
</evidence>
<evidence type="ECO:0007744" key="11">
    <source>
        <dbReference type="PDB" id="2OZ6"/>
    </source>
</evidence>
<evidence type="ECO:0007829" key="12">
    <source>
        <dbReference type="PDB" id="7FEW"/>
    </source>
</evidence>
<evidence type="ECO:0007829" key="13">
    <source>
        <dbReference type="PDB" id="7FF8"/>
    </source>
</evidence>
<feature type="chain" id="PRO_0000100189" description="cAMP-activated global transcriptional regulator Vfr">
    <location>
        <begin position="1"/>
        <end position="214"/>
    </location>
</feature>
<feature type="domain" description="HTH crp-type" evidence="1">
    <location>
        <begin position="142"/>
        <end position="214"/>
    </location>
</feature>
<feature type="DNA-binding region" description="H-T-H motif" evidence="1">
    <location>
        <begin position="174"/>
        <end position="193"/>
    </location>
</feature>
<feature type="binding site" evidence="6 11">
    <location>
        <begin position="59"/>
        <end position="60"/>
    </location>
    <ligand>
        <name>3',5'-cyclic AMP</name>
        <dbReference type="ChEBI" id="CHEBI:58165"/>
    </ligand>
</feature>
<feature type="binding site" evidence="6 11">
    <location>
        <begin position="73"/>
        <end position="75"/>
    </location>
    <ligand>
        <name>3',5'-cyclic AMP</name>
        <dbReference type="ChEBI" id="CHEBI:58165"/>
    </ligand>
</feature>
<feature type="binding site" evidence="6 11">
    <location>
        <begin position="87"/>
        <end position="88"/>
    </location>
    <ligand>
        <name>3',5'-cyclic AMP</name>
        <dbReference type="ChEBI" id="CHEBI:58165"/>
    </ligand>
</feature>
<feature type="binding site" evidence="6 11">
    <location>
        <begin position="132"/>
        <end position="133"/>
    </location>
    <ligand>
        <name>3',5'-cyclic AMP</name>
        <dbReference type="ChEBI" id="CHEBI:58165"/>
    </ligand>
</feature>
<feature type="binding site" evidence="6 11">
    <location>
        <position position="179"/>
    </location>
    <ligand>
        <name>3',5'-cyclic AMP</name>
        <dbReference type="ChEBI" id="CHEBI:58165"/>
    </ligand>
</feature>
<feature type="binding site" evidence="6 11">
    <location>
        <position position="185"/>
    </location>
    <ligand>
        <name>3',5'-cyclic AMP</name>
        <dbReference type="ChEBI" id="CHEBI:58165"/>
    </ligand>
</feature>
<feature type="helix" evidence="12">
    <location>
        <begin position="11"/>
        <end position="13"/>
    </location>
</feature>
<feature type="helix" evidence="12">
    <location>
        <begin position="14"/>
        <end position="17"/>
    </location>
</feature>
<feature type="strand" evidence="12">
    <location>
        <begin position="21"/>
        <end position="25"/>
    </location>
</feature>
<feature type="strand" evidence="12">
    <location>
        <begin position="30"/>
        <end position="32"/>
    </location>
</feature>
<feature type="strand" evidence="12">
    <location>
        <begin position="40"/>
        <end position="54"/>
    </location>
</feature>
<feature type="strand" evidence="12">
    <location>
        <begin position="60"/>
        <end position="67"/>
    </location>
</feature>
<feature type="strand" evidence="12">
    <location>
        <begin position="71"/>
        <end position="73"/>
    </location>
</feature>
<feature type="helix" evidence="12">
    <location>
        <begin position="75"/>
        <end position="77"/>
    </location>
</feature>
<feature type="strand" evidence="12">
    <location>
        <begin position="80"/>
        <end position="82"/>
    </location>
</feature>
<feature type="strand" evidence="12">
    <location>
        <begin position="89"/>
        <end position="95"/>
    </location>
</feature>
<feature type="strand" evidence="12">
    <location>
        <begin position="97"/>
        <end position="103"/>
    </location>
</feature>
<feature type="helix" evidence="12">
    <location>
        <begin position="104"/>
        <end position="113"/>
    </location>
</feature>
<feature type="helix" evidence="12">
    <location>
        <begin position="116"/>
        <end position="141"/>
    </location>
</feature>
<feature type="helix" evidence="12">
    <location>
        <begin position="144"/>
        <end position="155"/>
    </location>
</feature>
<feature type="strand" evidence="13">
    <location>
        <begin position="157"/>
        <end position="160"/>
    </location>
</feature>
<feature type="strand" evidence="12">
    <location>
        <begin position="162"/>
        <end position="164"/>
    </location>
</feature>
<feature type="strand" evidence="12">
    <location>
        <begin position="167"/>
        <end position="171"/>
    </location>
</feature>
<feature type="helix" evidence="12">
    <location>
        <begin position="174"/>
        <end position="181"/>
    </location>
</feature>
<feature type="helix" evidence="12">
    <location>
        <begin position="185"/>
        <end position="197"/>
    </location>
</feature>
<feature type="strand" evidence="12">
    <location>
        <begin position="200"/>
        <end position="203"/>
    </location>
</feature>
<feature type="strand" evidence="12">
    <location>
        <begin position="205"/>
        <end position="211"/>
    </location>
</feature>
<sequence length="214" mass="24225">MVAITHTPKLKHLDKLLAHCHRRRYTAKSTIIYAGDRCETLFFIIKGSVTILIEDDDGREMIIGYLNSGDFFGELGLFEKEGSEQERSAWVRAKVECEVAEISYAKFRELSQQDSEILYTLGSQMADRLRKTTRKVGDLAFLDVTGRVARTLLDLCQQPDAMTHPDGMQIKITRQEIGRIVGCSREMVGRVLKSLEEQGLVHVKGKTMVVFGTR</sequence>
<gene>
    <name type="primary">vfr</name>
    <name type="ordered locus">PA0652</name>
</gene>
<proteinExistence type="evidence at protein level"/>
<name>VFR_PSEAE</name>
<dbReference type="EMBL" id="U16318">
    <property type="protein sequence ID" value="AAA73464.1"/>
    <property type="molecule type" value="Genomic_DNA"/>
</dbReference>
<dbReference type="EMBL" id="AE004091">
    <property type="protein sequence ID" value="AAG04041.1"/>
    <property type="molecule type" value="Genomic_DNA"/>
</dbReference>
<dbReference type="PIR" id="A55540">
    <property type="entry name" value="A55540"/>
</dbReference>
<dbReference type="RefSeq" id="NP_249343.1">
    <property type="nucleotide sequence ID" value="NC_002516.2"/>
</dbReference>
<dbReference type="PDB" id="2OZ6">
    <property type="method" value="X-ray"/>
    <property type="resolution" value="2.80 A"/>
    <property type="chains" value="A=9-214"/>
</dbReference>
<dbReference type="PDB" id="7FEW">
    <property type="method" value="X-ray"/>
    <property type="resolution" value="1.75 A"/>
    <property type="chains" value="A/B=5-214"/>
</dbReference>
<dbReference type="PDB" id="7FF0">
    <property type="method" value="X-ray"/>
    <property type="resolution" value="2.60 A"/>
    <property type="chains" value="A/B=5-214"/>
</dbReference>
<dbReference type="PDB" id="7FF8">
    <property type="method" value="X-ray"/>
    <property type="resolution" value="2.80 A"/>
    <property type="chains" value="A/B=5-214"/>
</dbReference>
<dbReference type="PDB" id="7FF9">
    <property type="method" value="X-ray"/>
    <property type="resolution" value="2.40 A"/>
    <property type="chains" value="A/B/C/D/E/F/G/H=5-214"/>
</dbReference>
<dbReference type="PDBsum" id="2OZ6"/>
<dbReference type="PDBsum" id="7FEW"/>
<dbReference type="PDBsum" id="7FF0"/>
<dbReference type="PDBsum" id="7FF8"/>
<dbReference type="PDBsum" id="7FF9"/>
<dbReference type="SMR" id="P55222"/>
<dbReference type="FunCoup" id="P55222">
    <property type="interactions" value="674"/>
</dbReference>
<dbReference type="STRING" id="208964.PA0652"/>
<dbReference type="PaxDb" id="208964-PA0652"/>
<dbReference type="DNASU" id="880744"/>
<dbReference type="GeneID" id="880744"/>
<dbReference type="KEGG" id="pae:PA0652"/>
<dbReference type="PATRIC" id="fig|208964.12.peg.683"/>
<dbReference type="PseudoCAP" id="PA0652"/>
<dbReference type="HOGENOM" id="CLU_075053_3_5_6"/>
<dbReference type="InParanoid" id="P55222"/>
<dbReference type="OrthoDB" id="61906at2"/>
<dbReference type="PhylomeDB" id="P55222"/>
<dbReference type="BioCyc" id="PAER208964:G1FZ6-657-MONOMER"/>
<dbReference type="EvolutionaryTrace" id="P55222"/>
<dbReference type="Proteomes" id="UP000002438">
    <property type="component" value="Chromosome"/>
</dbReference>
<dbReference type="CollecTF" id="EXPREG_00000b50"/>
<dbReference type="GO" id="GO:0005829">
    <property type="term" value="C:cytosol"/>
    <property type="evidence" value="ECO:0000318"/>
    <property type="project" value="GO_Central"/>
</dbReference>
<dbReference type="GO" id="GO:0032993">
    <property type="term" value="C:protein-DNA complex"/>
    <property type="evidence" value="ECO:0000315"/>
    <property type="project" value="CollecTF"/>
</dbReference>
<dbReference type="GO" id="GO:0030552">
    <property type="term" value="F:cAMP binding"/>
    <property type="evidence" value="ECO:0007669"/>
    <property type="project" value="UniProtKB-KW"/>
</dbReference>
<dbReference type="GO" id="GO:0001216">
    <property type="term" value="F:DNA-binding transcription activator activity"/>
    <property type="evidence" value="ECO:0000315"/>
    <property type="project" value="CollecTF"/>
</dbReference>
<dbReference type="GO" id="GO:0003700">
    <property type="term" value="F:DNA-binding transcription factor activity"/>
    <property type="evidence" value="ECO:0000318"/>
    <property type="project" value="GO_Central"/>
</dbReference>
<dbReference type="GO" id="GO:0001217">
    <property type="term" value="F:DNA-binding transcription repressor activity"/>
    <property type="evidence" value="ECO:0000315"/>
    <property type="project" value="CollecTF"/>
</dbReference>
<dbReference type="GO" id="GO:0043565">
    <property type="term" value="F:sequence-specific DNA binding"/>
    <property type="evidence" value="ECO:0000353"/>
    <property type="project" value="CollecTF"/>
</dbReference>
<dbReference type="GO" id="GO:0000976">
    <property type="term" value="F:transcription cis-regulatory region binding"/>
    <property type="evidence" value="ECO:0000315"/>
    <property type="project" value="CollecTF"/>
</dbReference>
<dbReference type="GO" id="GO:0006351">
    <property type="term" value="P:DNA-templated transcription"/>
    <property type="evidence" value="ECO:0000315"/>
    <property type="project" value="CACAO"/>
</dbReference>
<dbReference type="GO" id="GO:0045893">
    <property type="term" value="P:positive regulation of DNA-templated transcription"/>
    <property type="evidence" value="ECO:0000314"/>
    <property type="project" value="CollecTF"/>
</dbReference>
<dbReference type="CDD" id="cd00038">
    <property type="entry name" value="CAP_ED"/>
    <property type="match status" value="1"/>
</dbReference>
<dbReference type="CDD" id="cd00092">
    <property type="entry name" value="HTH_CRP"/>
    <property type="match status" value="1"/>
</dbReference>
<dbReference type="FunFam" id="1.10.10.10:FF:000006">
    <property type="entry name" value="cAMP-activated global transcriptional regulator CRP"/>
    <property type="match status" value="1"/>
</dbReference>
<dbReference type="FunFam" id="2.60.120.10:FF:000001">
    <property type="entry name" value="cAMP-activated global transcriptional regulator CRP"/>
    <property type="match status" value="1"/>
</dbReference>
<dbReference type="Gene3D" id="2.60.120.10">
    <property type="entry name" value="Jelly Rolls"/>
    <property type="match status" value="1"/>
</dbReference>
<dbReference type="Gene3D" id="1.10.10.10">
    <property type="entry name" value="Winged helix-like DNA-binding domain superfamily/Winged helix DNA-binding domain"/>
    <property type="match status" value="1"/>
</dbReference>
<dbReference type="InterPro" id="IPR018488">
    <property type="entry name" value="cNMP-bd_CS"/>
</dbReference>
<dbReference type="InterPro" id="IPR000595">
    <property type="entry name" value="cNMP-bd_dom"/>
</dbReference>
<dbReference type="InterPro" id="IPR018490">
    <property type="entry name" value="cNMP-bd_dom_sf"/>
</dbReference>
<dbReference type="InterPro" id="IPR050397">
    <property type="entry name" value="Env_Response_Regulators"/>
</dbReference>
<dbReference type="InterPro" id="IPR012318">
    <property type="entry name" value="HTH_CRP"/>
</dbReference>
<dbReference type="InterPro" id="IPR014710">
    <property type="entry name" value="RmlC-like_jellyroll"/>
</dbReference>
<dbReference type="InterPro" id="IPR018335">
    <property type="entry name" value="Tscrpt_reg_HTH_Crp-type_CS"/>
</dbReference>
<dbReference type="InterPro" id="IPR036388">
    <property type="entry name" value="WH-like_DNA-bd_sf"/>
</dbReference>
<dbReference type="InterPro" id="IPR036390">
    <property type="entry name" value="WH_DNA-bd_sf"/>
</dbReference>
<dbReference type="NCBIfam" id="NF008732">
    <property type="entry name" value="PRK11753.1"/>
    <property type="match status" value="1"/>
</dbReference>
<dbReference type="PANTHER" id="PTHR24567">
    <property type="entry name" value="CRP FAMILY TRANSCRIPTIONAL REGULATORY PROTEIN"/>
    <property type="match status" value="1"/>
</dbReference>
<dbReference type="PANTHER" id="PTHR24567:SF68">
    <property type="entry name" value="DNA-BINDING TRANSCRIPTIONAL DUAL REGULATOR CRP"/>
    <property type="match status" value="1"/>
</dbReference>
<dbReference type="Pfam" id="PF00027">
    <property type="entry name" value="cNMP_binding"/>
    <property type="match status" value="1"/>
</dbReference>
<dbReference type="Pfam" id="PF13545">
    <property type="entry name" value="HTH_Crp_2"/>
    <property type="match status" value="1"/>
</dbReference>
<dbReference type="PRINTS" id="PR00034">
    <property type="entry name" value="HTHCRP"/>
</dbReference>
<dbReference type="SMART" id="SM00100">
    <property type="entry name" value="cNMP"/>
    <property type="match status" value="1"/>
</dbReference>
<dbReference type="SMART" id="SM00419">
    <property type="entry name" value="HTH_CRP"/>
    <property type="match status" value="1"/>
</dbReference>
<dbReference type="SUPFAM" id="SSF51206">
    <property type="entry name" value="cAMP-binding domain-like"/>
    <property type="match status" value="1"/>
</dbReference>
<dbReference type="SUPFAM" id="SSF46785">
    <property type="entry name" value="Winged helix' DNA-binding domain"/>
    <property type="match status" value="1"/>
</dbReference>
<dbReference type="PROSITE" id="PS00888">
    <property type="entry name" value="CNMP_BINDING_1"/>
    <property type="match status" value="1"/>
</dbReference>
<dbReference type="PROSITE" id="PS00889">
    <property type="entry name" value="CNMP_BINDING_2"/>
    <property type="match status" value="1"/>
</dbReference>
<dbReference type="PROSITE" id="PS50042">
    <property type="entry name" value="CNMP_BINDING_3"/>
    <property type="match status" value="1"/>
</dbReference>
<dbReference type="PROSITE" id="PS00042">
    <property type="entry name" value="HTH_CRP_1"/>
    <property type="match status" value="1"/>
</dbReference>
<dbReference type="PROSITE" id="PS51063">
    <property type="entry name" value="HTH_CRP_2"/>
    <property type="match status" value="1"/>
</dbReference>
<protein>
    <recommendedName>
        <fullName>cAMP-activated global transcriptional regulator Vfr</fullName>
    </recommendedName>
</protein>
<organism>
    <name type="scientific">Pseudomonas aeruginosa (strain ATCC 15692 / DSM 22644 / CIP 104116 / JCM 14847 / LMG 12228 / 1C / PRS 101 / PAO1)</name>
    <dbReference type="NCBI Taxonomy" id="208964"/>
    <lineage>
        <taxon>Bacteria</taxon>
        <taxon>Pseudomonadati</taxon>
        <taxon>Pseudomonadota</taxon>
        <taxon>Gammaproteobacteria</taxon>
        <taxon>Pseudomonadales</taxon>
        <taxon>Pseudomonadaceae</taxon>
        <taxon>Pseudomonas</taxon>
    </lineage>
</organism>
<accession>P55222</accession>